<evidence type="ECO:0000250" key="1"/>
<evidence type="ECO:0000255" key="2">
    <source>
        <dbReference type="PROSITE-ProRule" id="PRU00238"/>
    </source>
</evidence>
<evidence type="ECO:0007829" key="3">
    <source>
        <dbReference type="PDB" id="3EOK"/>
    </source>
</evidence>
<accession>P01986</accession>
<name>HBA_ANAPL</name>
<comment type="function">
    <text>Involved in oxygen transport from the lung to the various peripheral tissues.</text>
</comment>
<comment type="subunit">
    <text>Heterotetramer of two alpha chains and two beta chains.</text>
</comment>
<comment type="tissue specificity">
    <text>Red blood cells.</text>
</comment>
<comment type="similarity">
    <text evidence="2">Belongs to the globin family.</text>
</comment>
<gene>
    <name type="primary">HBAA</name>
</gene>
<protein>
    <recommendedName>
        <fullName>Hemoglobin subunit alpha-A</fullName>
    </recommendedName>
    <alternativeName>
        <fullName>Alpha-A-globin</fullName>
    </alternativeName>
    <alternativeName>
        <fullName>Hemoglobin alpha-A chain</fullName>
    </alternativeName>
</protein>
<dbReference type="EMBL" id="X02008">
    <property type="protein sequence ID" value="CAA26039.1"/>
    <property type="molecule type" value="mRNA"/>
</dbReference>
<dbReference type="PIR" id="A02309">
    <property type="entry name" value="HADK"/>
</dbReference>
<dbReference type="PDB" id="3EOK">
    <property type="method" value="X-ray"/>
    <property type="resolution" value="2.10 A"/>
    <property type="chains" value="A=2-142"/>
</dbReference>
<dbReference type="PDBsum" id="3EOK"/>
<dbReference type="SMR" id="P01986"/>
<dbReference type="EvolutionaryTrace" id="P01986"/>
<dbReference type="Proteomes" id="UP000694400">
    <property type="component" value="Unplaced"/>
</dbReference>
<dbReference type="GO" id="GO:0072562">
    <property type="term" value="C:blood microparticle"/>
    <property type="evidence" value="ECO:0007669"/>
    <property type="project" value="TreeGrafter"/>
</dbReference>
<dbReference type="GO" id="GO:0031838">
    <property type="term" value="C:haptoglobin-hemoglobin complex"/>
    <property type="evidence" value="ECO:0007669"/>
    <property type="project" value="TreeGrafter"/>
</dbReference>
<dbReference type="GO" id="GO:0005833">
    <property type="term" value="C:hemoglobin complex"/>
    <property type="evidence" value="ECO:0007669"/>
    <property type="project" value="InterPro"/>
</dbReference>
<dbReference type="GO" id="GO:0031720">
    <property type="term" value="F:haptoglobin binding"/>
    <property type="evidence" value="ECO:0007669"/>
    <property type="project" value="TreeGrafter"/>
</dbReference>
<dbReference type="GO" id="GO:0020037">
    <property type="term" value="F:heme binding"/>
    <property type="evidence" value="ECO:0007669"/>
    <property type="project" value="InterPro"/>
</dbReference>
<dbReference type="GO" id="GO:0005506">
    <property type="term" value="F:iron ion binding"/>
    <property type="evidence" value="ECO:0007669"/>
    <property type="project" value="InterPro"/>
</dbReference>
<dbReference type="GO" id="GO:0043177">
    <property type="term" value="F:organic acid binding"/>
    <property type="evidence" value="ECO:0007669"/>
    <property type="project" value="TreeGrafter"/>
</dbReference>
<dbReference type="GO" id="GO:0019825">
    <property type="term" value="F:oxygen binding"/>
    <property type="evidence" value="ECO:0007669"/>
    <property type="project" value="InterPro"/>
</dbReference>
<dbReference type="GO" id="GO:0005344">
    <property type="term" value="F:oxygen carrier activity"/>
    <property type="evidence" value="ECO:0007669"/>
    <property type="project" value="UniProtKB-KW"/>
</dbReference>
<dbReference type="GO" id="GO:0004601">
    <property type="term" value="F:peroxidase activity"/>
    <property type="evidence" value="ECO:0007669"/>
    <property type="project" value="TreeGrafter"/>
</dbReference>
<dbReference type="GO" id="GO:0042744">
    <property type="term" value="P:hydrogen peroxide catabolic process"/>
    <property type="evidence" value="ECO:0007669"/>
    <property type="project" value="TreeGrafter"/>
</dbReference>
<dbReference type="CDD" id="cd08927">
    <property type="entry name" value="Hb-alpha-like"/>
    <property type="match status" value="1"/>
</dbReference>
<dbReference type="FunFam" id="1.10.490.10:FF:000002">
    <property type="entry name" value="Hemoglobin subunit alpha"/>
    <property type="match status" value="1"/>
</dbReference>
<dbReference type="Gene3D" id="1.10.490.10">
    <property type="entry name" value="Globins"/>
    <property type="match status" value="1"/>
</dbReference>
<dbReference type="InterPro" id="IPR000971">
    <property type="entry name" value="Globin"/>
</dbReference>
<dbReference type="InterPro" id="IPR009050">
    <property type="entry name" value="Globin-like_sf"/>
</dbReference>
<dbReference type="InterPro" id="IPR012292">
    <property type="entry name" value="Globin/Proto"/>
</dbReference>
<dbReference type="InterPro" id="IPR002338">
    <property type="entry name" value="Hemoglobin_a-typ"/>
</dbReference>
<dbReference type="InterPro" id="IPR050056">
    <property type="entry name" value="Hemoglobin_oxygen_transport"/>
</dbReference>
<dbReference type="InterPro" id="IPR002339">
    <property type="entry name" value="Hemoglobin_pi"/>
</dbReference>
<dbReference type="PANTHER" id="PTHR11442">
    <property type="entry name" value="HEMOGLOBIN FAMILY MEMBER"/>
    <property type="match status" value="1"/>
</dbReference>
<dbReference type="PANTHER" id="PTHR11442:SF48">
    <property type="entry name" value="HEMOGLOBIN SUBUNIT ALPHA"/>
    <property type="match status" value="1"/>
</dbReference>
<dbReference type="Pfam" id="PF00042">
    <property type="entry name" value="Globin"/>
    <property type="match status" value="1"/>
</dbReference>
<dbReference type="PRINTS" id="PR00612">
    <property type="entry name" value="ALPHAHAEM"/>
</dbReference>
<dbReference type="PRINTS" id="PR00815">
    <property type="entry name" value="PIHAEM"/>
</dbReference>
<dbReference type="SUPFAM" id="SSF46458">
    <property type="entry name" value="Globin-like"/>
    <property type="match status" value="1"/>
</dbReference>
<dbReference type="PROSITE" id="PS01033">
    <property type="entry name" value="GLOBIN"/>
    <property type="match status" value="1"/>
</dbReference>
<reference key="1">
    <citation type="journal article" date="1981" name="Eur. J. Biochem.">
        <title>Nucleotide sequence for a novel duck alpha-globin gene.</title>
        <authorList>
            <person name="Paddock G.V."/>
            <person name="Gaubatz J."/>
        </authorList>
    </citation>
    <scope>NUCLEOTIDE SEQUENCE [MRNA]</scope>
</reference>
<organism>
    <name type="scientific">Anas platyrhynchos</name>
    <name type="common">Mallard</name>
    <name type="synonym">Anas boschas</name>
    <dbReference type="NCBI Taxonomy" id="8839"/>
    <lineage>
        <taxon>Eukaryota</taxon>
        <taxon>Metazoa</taxon>
        <taxon>Chordata</taxon>
        <taxon>Craniata</taxon>
        <taxon>Vertebrata</taxon>
        <taxon>Euteleostomi</taxon>
        <taxon>Archelosauria</taxon>
        <taxon>Archosauria</taxon>
        <taxon>Dinosauria</taxon>
        <taxon>Saurischia</taxon>
        <taxon>Theropoda</taxon>
        <taxon>Coelurosauria</taxon>
        <taxon>Aves</taxon>
        <taxon>Neognathae</taxon>
        <taxon>Galloanserae</taxon>
        <taxon>Anseriformes</taxon>
        <taxon>Anatidae</taxon>
        <taxon>Anatinae</taxon>
        <taxon>Anas</taxon>
    </lineage>
</organism>
<sequence length="142" mass="15365">MVLSAADKTNVKGVFSKIGGHAEEYGAETLERMFIAYPQTKTYFPHFDLSHGSAQIKAHGKKVAAALVEAVNHVDDIAGALSKLSDLHAQKLRVDPVNFKFLGHCFLVVVAIHHPAALTPEVHASLDKFMCAVGAVLTAKYR</sequence>
<feature type="initiator methionine" description="Removed" evidence="1">
    <location>
        <position position="1"/>
    </location>
</feature>
<feature type="chain" id="PRO_0000052547" description="Hemoglobin subunit alpha-A">
    <location>
        <begin position="2"/>
        <end position="142"/>
    </location>
</feature>
<feature type="domain" description="Globin" evidence="2">
    <location>
        <begin position="2"/>
        <end position="142"/>
    </location>
</feature>
<feature type="binding site" evidence="2">
    <location>
        <position position="59"/>
    </location>
    <ligand>
        <name>O2</name>
        <dbReference type="ChEBI" id="CHEBI:15379"/>
    </ligand>
</feature>
<feature type="binding site" description="proximal binding residue" evidence="2">
    <location>
        <position position="88"/>
    </location>
    <ligand>
        <name>heme b</name>
        <dbReference type="ChEBI" id="CHEBI:60344"/>
    </ligand>
    <ligandPart>
        <name>Fe</name>
        <dbReference type="ChEBI" id="CHEBI:18248"/>
    </ligandPart>
</feature>
<feature type="helix" evidence="3">
    <location>
        <begin position="5"/>
        <end position="18"/>
    </location>
</feature>
<feature type="helix" evidence="3">
    <location>
        <begin position="19"/>
        <end position="21"/>
    </location>
</feature>
<feature type="helix" evidence="3">
    <location>
        <begin position="22"/>
        <end position="36"/>
    </location>
</feature>
<feature type="helix" evidence="3">
    <location>
        <begin position="38"/>
        <end position="43"/>
    </location>
</feature>
<feature type="helix" evidence="3">
    <location>
        <begin position="54"/>
        <end position="72"/>
    </location>
</feature>
<feature type="turn" evidence="3">
    <location>
        <begin position="73"/>
        <end position="75"/>
    </location>
</feature>
<feature type="helix" evidence="3">
    <location>
        <begin position="77"/>
        <end position="80"/>
    </location>
</feature>
<feature type="helix" evidence="3">
    <location>
        <begin position="82"/>
        <end position="89"/>
    </location>
</feature>
<feature type="helix" evidence="3">
    <location>
        <begin position="97"/>
        <end position="113"/>
    </location>
</feature>
<feature type="helix" evidence="3">
    <location>
        <begin position="115"/>
        <end position="117"/>
    </location>
</feature>
<feature type="helix" evidence="3">
    <location>
        <begin position="120"/>
        <end position="137"/>
    </location>
</feature>
<feature type="turn" evidence="3">
    <location>
        <begin position="138"/>
        <end position="140"/>
    </location>
</feature>
<proteinExistence type="evidence at protein level"/>
<keyword id="KW-0002">3D-structure</keyword>
<keyword id="KW-0349">Heme</keyword>
<keyword id="KW-0408">Iron</keyword>
<keyword id="KW-0479">Metal-binding</keyword>
<keyword id="KW-0561">Oxygen transport</keyword>
<keyword id="KW-0813">Transport</keyword>